<sequence>MKEVIDTVGRRKTSVARVFMSPGKGKIVVNKLPVEEYFKDEFKRSQALKPLAVAEKQNDFDITINVKGGGLTGQSGAVSLAIARALVEFDESIRAALRPDRLLTRDPRMVERKKYGKKKARKSFQFSKR</sequence>
<name>RS9_CHLTE</name>
<protein>
    <recommendedName>
        <fullName evidence="1">Small ribosomal subunit protein uS9</fullName>
    </recommendedName>
    <alternativeName>
        <fullName evidence="3">30S ribosomal protein S9</fullName>
    </alternativeName>
</protein>
<accession>Q8KBK5</accession>
<organism>
    <name type="scientific">Chlorobaculum tepidum (strain ATCC 49652 / DSM 12025 / NBRC 103806 / TLS)</name>
    <name type="common">Chlorobium tepidum</name>
    <dbReference type="NCBI Taxonomy" id="194439"/>
    <lineage>
        <taxon>Bacteria</taxon>
        <taxon>Pseudomonadati</taxon>
        <taxon>Chlorobiota</taxon>
        <taxon>Chlorobiia</taxon>
        <taxon>Chlorobiales</taxon>
        <taxon>Chlorobiaceae</taxon>
        <taxon>Chlorobaculum</taxon>
    </lineage>
</organism>
<dbReference type="EMBL" id="AE006470">
    <property type="protein sequence ID" value="AAM73003.1"/>
    <property type="molecule type" value="Genomic_DNA"/>
</dbReference>
<dbReference type="RefSeq" id="NP_662661.1">
    <property type="nucleotide sequence ID" value="NC_002932.3"/>
</dbReference>
<dbReference type="RefSeq" id="WP_010933442.1">
    <property type="nucleotide sequence ID" value="NC_002932.3"/>
</dbReference>
<dbReference type="SMR" id="Q8KBK5"/>
<dbReference type="STRING" id="194439.CT1782"/>
<dbReference type="EnsemblBacteria" id="AAM73003">
    <property type="protein sequence ID" value="AAM73003"/>
    <property type="gene ID" value="CT1782"/>
</dbReference>
<dbReference type="KEGG" id="cte:CT1782"/>
<dbReference type="PATRIC" id="fig|194439.7.peg.1616"/>
<dbReference type="eggNOG" id="COG0103">
    <property type="taxonomic scope" value="Bacteria"/>
</dbReference>
<dbReference type="HOGENOM" id="CLU_046483_2_1_10"/>
<dbReference type="OrthoDB" id="9803965at2"/>
<dbReference type="Proteomes" id="UP000001007">
    <property type="component" value="Chromosome"/>
</dbReference>
<dbReference type="GO" id="GO:0005737">
    <property type="term" value="C:cytoplasm"/>
    <property type="evidence" value="ECO:0007669"/>
    <property type="project" value="UniProtKB-ARBA"/>
</dbReference>
<dbReference type="GO" id="GO:0015935">
    <property type="term" value="C:small ribosomal subunit"/>
    <property type="evidence" value="ECO:0007669"/>
    <property type="project" value="TreeGrafter"/>
</dbReference>
<dbReference type="GO" id="GO:0003723">
    <property type="term" value="F:RNA binding"/>
    <property type="evidence" value="ECO:0007669"/>
    <property type="project" value="TreeGrafter"/>
</dbReference>
<dbReference type="GO" id="GO:0003735">
    <property type="term" value="F:structural constituent of ribosome"/>
    <property type="evidence" value="ECO:0007669"/>
    <property type="project" value="InterPro"/>
</dbReference>
<dbReference type="GO" id="GO:0006412">
    <property type="term" value="P:translation"/>
    <property type="evidence" value="ECO:0007669"/>
    <property type="project" value="UniProtKB-UniRule"/>
</dbReference>
<dbReference type="FunFam" id="3.30.230.10:FF:000001">
    <property type="entry name" value="30S ribosomal protein S9"/>
    <property type="match status" value="1"/>
</dbReference>
<dbReference type="Gene3D" id="3.30.230.10">
    <property type="match status" value="1"/>
</dbReference>
<dbReference type="HAMAP" id="MF_00532_B">
    <property type="entry name" value="Ribosomal_uS9_B"/>
    <property type="match status" value="1"/>
</dbReference>
<dbReference type="InterPro" id="IPR020568">
    <property type="entry name" value="Ribosomal_Su5_D2-typ_SF"/>
</dbReference>
<dbReference type="InterPro" id="IPR000754">
    <property type="entry name" value="Ribosomal_uS9"/>
</dbReference>
<dbReference type="InterPro" id="IPR023035">
    <property type="entry name" value="Ribosomal_uS9_bac/plastid"/>
</dbReference>
<dbReference type="InterPro" id="IPR020574">
    <property type="entry name" value="Ribosomal_uS9_CS"/>
</dbReference>
<dbReference type="InterPro" id="IPR014721">
    <property type="entry name" value="Ribsml_uS5_D2-typ_fold_subgr"/>
</dbReference>
<dbReference type="NCBIfam" id="NF001099">
    <property type="entry name" value="PRK00132.1"/>
    <property type="match status" value="1"/>
</dbReference>
<dbReference type="PANTHER" id="PTHR21569">
    <property type="entry name" value="RIBOSOMAL PROTEIN S9"/>
    <property type="match status" value="1"/>
</dbReference>
<dbReference type="PANTHER" id="PTHR21569:SF1">
    <property type="entry name" value="SMALL RIBOSOMAL SUBUNIT PROTEIN US9M"/>
    <property type="match status" value="1"/>
</dbReference>
<dbReference type="Pfam" id="PF00380">
    <property type="entry name" value="Ribosomal_S9"/>
    <property type="match status" value="1"/>
</dbReference>
<dbReference type="SUPFAM" id="SSF54211">
    <property type="entry name" value="Ribosomal protein S5 domain 2-like"/>
    <property type="match status" value="1"/>
</dbReference>
<dbReference type="PROSITE" id="PS00360">
    <property type="entry name" value="RIBOSOMAL_S9"/>
    <property type="match status" value="1"/>
</dbReference>
<keyword id="KW-1185">Reference proteome</keyword>
<keyword id="KW-0687">Ribonucleoprotein</keyword>
<keyword id="KW-0689">Ribosomal protein</keyword>
<reference key="1">
    <citation type="journal article" date="2002" name="Proc. Natl. Acad. Sci. U.S.A.">
        <title>The complete genome sequence of Chlorobium tepidum TLS, a photosynthetic, anaerobic, green-sulfur bacterium.</title>
        <authorList>
            <person name="Eisen J.A."/>
            <person name="Nelson K.E."/>
            <person name="Paulsen I.T."/>
            <person name="Heidelberg J.F."/>
            <person name="Wu M."/>
            <person name="Dodson R.J."/>
            <person name="DeBoy R.T."/>
            <person name="Gwinn M.L."/>
            <person name="Nelson W.C."/>
            <person name="Haft D.H."/>
            <person name="Hickey E.K."/>
            <person name="Peterson J.D."/>
            <person name="Durkin A.S."/>
            <person name="Kolonay J.F."/>
            <person name="Yang F."/>
            <person name="Holt I.E."/>
            <person name="Umayam L.A."/>
            <person name="Mason T.M."/>
            <person name="Brenner M."/>
            <person name="Shea T.P."/>
            <person name="Parksey D.S."/>
            <person name="Nierman W.C."/>
            <person name="Feldblyum T.V."/>
            <person name="Hansen C.L."/>
            <person name="Craven M.B."/>
            <person name="Radune D."/>
            <person name="Vamathevan J.J."/>
            <person name="Khouri H.M."/>
            <person name="White O."/>
            <person name="Gruber T.M."/>
            <person name="Ketchum K.A."/>
            <person name="Venter J.C."/>
            <person name="Tettelin H."/>
            <person name="Bryant D.A."/>
            <person name="Fraser C.M."/>
        </authorList>
    </citation>
    <scope>NUCLEOTIDE SEQUENCE [LARGE SCALE GENOMIC DNA]</scope>
    <source>
        <strain>ATCC 49652 / DSM 12025 / NBRC 103806 / TLS</strain>
    </source>
</reference>
<feature type="chain" id="PRO_0000111344" description="Small ribosomal subunit protein uS9">
    <location>
        <begin position="1"/>
        <end position="129"/>
    </location>
</feature>
<feature type="region of interest" description="Disordered" evidence="2">
    <location>
        <begin position="108"/>
        <end position="129"/>
    </location>
</feature>
<feature type="compositionally biased region" description="Basic residues" evidence="2">
    <location>
        <begin position="114"/>
        <end position="129"/>
    </location>
</feature>
<gene>
    <name evidence="1" type="primary">rpsI</name>
    <name type="ordered locus">CT1782</name>
</gene>
<comment type="similarity">
    <text evidence="1">Belongs to the universal ribosomal protein uS9 family.</text>
</comment>
<evidence type="ECO:0000255" key="1">
    <source>
        <dbReference type="HAMAP-Rule" id="MF_00532"/>
    </source>
</evidence>
<evidence type="ECO:0000256" key="2">
    <source>
        <dbReference type="SAM" id="MobiDB-lite"/>
    </source>
</evidence>
<evidence type="ECO:0000305" key="3"/>
<proteinExistence type="inferred from homology"/>